<dbReference type="GO" id="GO:0005576">
    <property type="term" value="C:extracellular region"/>
    <property type="evidence" value="ECO:0000314"/>
    <property type="project" value="UniProtKB"/>
</dbReference>
<dbReference type="GO" id="GO:0006952">
    <property type="term" value="P:defense response"/>
    <property type="evidence" value="ECO:0007669"/>
    <property type="project" value="UniProtKB-KW"/>
</dbReference>
<keyword id="KW-0878">Amphibian defense peptide</keyword>
<keyword id="KW-0929">Antimicrobial</keyword>
<keyword id="KW-0903">Direct protein sequencing</keyword>
<keyword id="KW-0964">Secreted</keyword>
<evidence type="ECO:0000250" key="1">
    <source>
        <dbReference type="UniProtKB" id="A0A193H395"/>
    </source>
</evidence>
<evidence type="ECO:0000269" key="2">
    <source>
    </source>
</evidence>
<evidence type="ECO:0000303" key="3">
    <source>
    </source>
</evidence>
<evidence type="ECO:0000305" key="4"/>
<evidence type="ECO:0000305" key="5">
    <source>
    </source>
</evidence>
<comment type="function">
    <text evidence="1">Has antimicrobial activity.</text>
</comment>
<comment type="subcellular location">
    <subcellularLocation>
        <location evidence="2">Secreted</location>
    </subcellularLocation>
</comment>
<comment type="tissue specificity">
    <text evidence="5">Expressed by the skin glands.</text>
</comment>
<comment type="mass spectrometry"/>
<comment type="similarity">
    <text evidence="4">Belongs to the frog skin active peptide (FSAP) family. Cruzioseptin subfamily.</text>
</comment>
<accession>C0HK11</accession>
<sequence>GFLDIVKGVGLVALGAVSKS</sequence>
<name>CZS15_CRUCA</name>
<protein>
    <recommendedName>
        <fullName evidence="3">Cruzioseptin-15</fullName>
        <shortName evidence="3">CZS-15</shortName>
    </recommendedName>
</protein>
<feature type="peptide" id="PRO_0000439488" description="Cruzioseptin-15" evidence="2">
    <location>
        <begin position="1"/>
        <end position="20"/>
    </location>
</feature>
<proteinExistence type="evidence at protein level"/>
<reference evidence="4" key="1">
    <citation type="journal article" date="2016" name="J. Proteomics">
        <title>Peptidomic approach identifies cruzioseptins, a new family of potent antimicrobial peptides in the splendid leaf frog, Cruziohyla calcarifer.</title>
        <authorList>
            <person name="Proano-Bolanos C."/>
            <person name="Zhou M."/>
            <person name="Wang L."/>
            <person name="Coloma L.A."/>
            <person name="Chen T."/>
            <person name="Shaw C."/>
        </authorList>
    </citation>
    <scope>PROTEIN SEQUENCE</scope>
    <scope>SUBCELLULAR LOCATION</scope>
    <scope>MASS SPECTROMETRY</scope>
    <scope>IDENTIFICATION BY MASS SPECTROMETRY</scope>
    <source>
        <tissue evidence="3">Skin secretion</tissue>
    </source>
</reference>
<organism evidence="3">
    <name type="scientific">Cruziohyla calcarifer</name>
    <name type="common">Splendid leaf frog</name>
    <name type="synonym">Agalychnis calcarifer</name>
    <dbReference type="NCBI Taxonomy" id="318249"/>
    <lineage>
        <taxon>Eukaryota</taxon>
        <taxon>Metazoa</taxon>
        <taxon>Chordata</taxon>
        <taxon>Craniata</taxon>
        <taxon>Vertebrata</taxon>
        <taxon>Euteleostomi</taxon>
        <taxon>Amphibia</taxon>
        <taxon>Batrachia</taxon>
        <taxon>Anura</taxon>
        <taxon>Neobatrachia</taxon>
        <taxon>Hyloidea</taxon>
        <taxon>Hylidae</taxon>
        <taxon>Phyllomedusinae</taxon>
        <taxon>Cruziohyla</taxon>
    </lineage>
</organism>